<reference key="1">
    <citation type="journal article" date="2005" name="Mar. Pollut. Bull.">
        <title>Molecular cloning and mRNA expression of cytochrome P4501A1 and 1A2 in the liver of common minke whales (Balaenoptera acutorostrata).</title>
        <authorList>
            <person name="Niimi S."/>
            <person name="Watanabe M.X."/>
            <person name="Kim E.Y."/>
            <person name="Iwata H."/>
            <person name="Yasunaga G."/>
            <person name="Fujise Y."/>
            <person name="Tanabe S."/>
        </authorList>
    </citation>
    <scope>NUCLEOTIDE SEQUENCE [MRNA]</scope>
    <source>
        <tissue>Liver</tissue>
    </source>
</reference>
<dbReference type="EC" id="1.14.14.1" evidence="2"/>
<dbReference type="EC" id="4.2.1.152" evidence="2"/>
<dbReference type="EMBL" id="AB231892">
    <property type="protein sequence ID" value="BAE46563.1"/>
    <property type="molecule type" value="mRNA"/>
</dbReference>
<dbReference type="SMR" id="Q3LFT9"/>
<dbReference type="GlyCosmos" id="Q3LFT9">
    <property type="glycosylation" value="1 site, No reported glycans"/>
</dbReference>
<dbReference type="UniPathway" id="UPA00296"/>
<dbReference type="UniPathway" id="UPA00383"/>
<dbReference type="UniPathway" id="UPA00912"/>
<dbReference type="GO" id="GO:0005789">
    <property type="term" value="C:endoplasmic reticulum membrane"/>
    <property type="evidence" value="ECO:0007669"/>
    <property type="project" value="UniProtKB-SubCell"/>
</dbReference>
<dbReference type="GO" id="GO:0101020">
    <property type="term" value="F:estrogen 16-alpha-hydroxylase activity"/>
    <property type="evidence" value="ECO:0000250"/>
    <property type="project" value="UniProtKB"/>
</dbReference>
<dbReference type="GO" id="GO:0101021">
    <property type="term" value="F:estrogen 2-hydroxylase activity"/>
    <property type="evidence" value="ECO:0000250"/>
    <property type="project" value="UniProtKB"/>
</dbReference>
<dbReference type="GO" id="GO:0020037">
    <property type="term" value="F:heme binding"/>
    <property type="evidence" value="ECO:0000250"/>
    <property type="project" value="UniProtKB"/>
</dbReference>
<dbReference type="GO" id="GO:0106256">
    <property type="term" value="F:hydroperoxy icosatetraenoate dehydratase activity"/>
    <property type="evidence" value="ECO:0007669"/>
    <property type="project" value="UniProtKB-EC"/>
</dbReference>
<dbReference type="GO" id="GO:0005506">
    <property type="term" value="F:iron ion binding"/>
    <property type="evidence" value="ECO:0007669"/>
    <property type="project" value="InterPro"/>
</dbReference>
<dbReference type="GO" id="GO:0004508">
    <property type="term" value="F:steroid 17-alpha-monooxygenase activity"/>
    <property type="evidence" value="ECO:0007669"/>
    <property type="project" value="TreeGrafter"/>
</dbReference>
<dbReference type="GO" id="GO:0019369">
    <property type="term" value="P:arachidonate metabolic process"/>
    <property type="evidence" value="ECO:0007669"/>
    <property type="project" value="UniProtKB-UniPathway"/>
</dbReference>
<dbReference type="GO" id="GO:0008203">
    <property type="term" value="P:cholesterol metabolic process"/>
    <property type="evidence" value="ECO:0007669"/>
    <property type="project" value="UniProtKB-UniPathway"/>
</dbReference>
<dbReference type="GO" id="GO:0008210">
    <property type="term" value="P:estrogen metabolic process"/>
    <property type="evidence" value="ECO:0000250"/>
    <property type="project" value="UniProtKB"/>
</dbReference>
<dbReference type="GO" id="GO:0042446">
    <property type="term" value="P:hormone biosynthetic process"/>
    <property type="evidence" value="ECO:0007669"/>
    <property type="project" value="TreeGrafter"/>
</dbReference>
<dbReference type="GO" id="GO:0042448">
    <property type="term" value="P:progesterone metabolic process"/>
    <property type="evidence" value="ECO:0007669"/>
    <property type="project" value="TreeGrafter"/>
</dbReference>
<dbReference type="GO" id="GO:0042572">
    <property type="term" value="P:retinol metabolic process"/>
    <property type="evidence" value="ECO:0000250"/>
    <property type="project" value="UniProtKB"/>
</dbReference>
<dbReference type="FunFam" id="1.10.630.10:FF:000002">
    <property type="entry name" value="Cytochrome P450 1A1"/>
    <property type="match status" value="1"/>
</dbReference>
<dbReference type="Gene3D" id="1.10.630.10">
    <property type="entry name" value="Cytochrome P450"/>
    <property type="match status" value="1"/>
</dbReference>
<dbReference type="InterPro" id="IPR001128">
    <property type="entry name" value="Cyt_P450"/>
</dbReference>
<dbReference type="InterPro" id="IPR017972">
    <property type="entry name" value="Cyt_P450_CS"/>
</dbReference>
<dbReference type="InterPro" id="IPR002401">
    <property type="entry name" value="Cyt_P450_E_grp-I"/>
</dbReference>
<dbReference type="InterPro" id="IPR008066">
    <property type="entry name" value="Cyt_P450_E_grp-I_CYP1"/>
</dbReference>
<dbReference type="InterPro" id="IPR036396">
    <property type="entry name" value="Cyt_P450_sf"/>
</dbReference>
<dbReference type="PANTHER" id="PTHR24289:SF21">
    <property type="entry name" value="CYTOCHROME P450 1A"/>
    <property type="match status" value="1"/>
</dbReference>
<dbReference type="PANTHER" id="PTHR24289">
    <property type="entry name" value="STEROID 17-ALPHA-HYDROXYLASE/17,20 LYASE"/>
    <property type="match status" value="1"/>
</dbReference>
<dbReference type="Pfam" id="PF00067">
    <property type="entry name" value="p450"/>
    <property type="match status" value="1"/>
</dbReference>
<dbReference type="PRINTS" id="PR00463">
    <property type="entry name" value="EP450I"/>
</dbReference>
<dbReference type="PRINTS" id="PR01683">
    <property type="entry name" value="EP450ICYP1A"/>
</dbReference>
<dbReference type="PRINTS" id="PR00385">
    <property type="entry name" value="P450"/>
</dbReference>
<dbReference type="SUPFAM" id="SSF48264">
    <property type="entry name" value="Cytochrome P450"/>
    <property type="match status" value="1"/>
</dbReference>
<dbReference type="PROSITE" id="PS00086">
    <property type="entry name" value="CYTOCHROME_P450"/>
    <property type="match status" value="1"/>
</dbReference>
<evidence type="ECO:0000250" key="1"/>
<evidence type="ECO:0000250" key="2">
    <source>
        <dbReference type="UniProtKB" id="P05177"/>
    </source>
</evidence>
<evidence type="ECO:0000305" key="3"/>
<sequence>MALSQATPFSATELLLASATFCLVFWVVKAWQPRVPKGLKSPPGPWSWPLIGHVLTLGKSPHLALSRLSQRYGDVLQIRIGCTPVLVLSGLDTIRQALVRQGDDFKGRPDLYSFTLVADGQSMTFNPDSGPVWAAQRRLAQNALNSFSVASDPASSSSCYLEMHVSKEAEALIGKFQELMAGSGRFDPYDHVVVSVAKVIGAMCFGQHFPQSSGEMVSLVRNTHDFVETASSGSPVDFFPILKYLPNPALQKYKSFNRRFLQFLWKMVQEHHQDFDKNRVQDIVGALFKHYEDNSRASGGLMPQKKTVNLVNDIFAAGFDPITTAISWSLLYLVTNPEIQRKIQQELDTVIGRARRPRLSDRSQLPYLEAFILETFRHSSFVPFTIPHSTIRDTTLNGFYIPKELCVFINQWQVNHDPKLWGDPSEFRPERFLTSHDTTISKTLSEKVMLFGMGKRRCIGEVLAKWEIFLFLAILLQQLEFSVPPGVKVDLTPTYGLTMKPAPCEHVQARLRFPIK</sequence>
<feature type="chain" id="PRO_0000232906" description="Cytochrome P450 1A2">
    <location>
        <begin position="1"/>
        <end position="516"/>
    </location>
</feature>
<feature type="binding site" evidence="1">
    <location>
        <position position="226"/>
    </location>
    <ligand>
        <name>substrate</name>
    </ligand>
</feature>
<feature type="binding site" description="axial binding residue" evidence="1">
    <location>
        <position position="458"/>
    </location>
    <ligand>
        <name>heme</name>
        <dbReference type="ChEBI" id="CHEBI:30413"/>
    </ligand>
    <ligandPart>
        <name>Fe</name>
        <dbReference type="ChEBI" id="CHEBI:18248"/>
    </ligandPart>
</feature>
<feature type="glycosylation site" description="O-linked (GlcNAc) serine" evidence="1">
    <location>
        <position position="69"/>
    </location>
</feature>
<organism>
    <name type="scientific">Balaenoptera acutorostrata</name>
    <name type="common">Common minke whale</name>
    <name type="synonym">Balaena rostrata</name>
    <dbReference type="NCBI Taxonomy" id="9767"/>
    <lineage>
        <taxon>Eukaryota</taxon>
        <taxon>Metazoa</taxon>
        <taxon>Chordata</taxon>
        <taxon>Craniata</taxon>
        <taxon>Vertebrata</taxon>
        <taxon>Euteleostomi</taxon>
        <taxon>Mammalia</taxon>
        <taxon>Eutheria</taxon>
        <taxon>Laurasiatheria</taxon>
        <taxon>Artiodactyla</taxon>
        <taxon>Whippomorpha</taxon>
        <taxon>Cetacea</taxon>
        <taxon>Mysticeti</taxon>
        <taxon>Balaenopteridae</taxon>
        <taxon>Balaenoptera</taxon>
    </lineage>
</organism>
<keyword id="KW-0256">Endoplasmic reticulum</keyword>
<keyword id="KW-0276">Fatty acid metabolism</keyword>
<keyword id="KW-0325">Glycoprotein</keyword>
<keyword id="KW-0349">Heme</keyword>
<keyword id="KW-0408">Iron</keyword>
<keyword id="KW-0443">Lipid metabolism</keyword>
<keyword id="KW-0456">Lyase</keyword>
<keyword id="KW-0472">Membrane</keyword>
<keyword id="KW-0479">Metal-binding</keyword>
<keyword id="KW-0492">Microsome</keyword>
<keyword id="KW-0503">Monooxygenase</keyword>
<keyword id="KW-0560">Oxidoreductase</keyword>
<keyword id="KW-0753">Steroid metabolism</keyword>
<keyword id="KW-1207">Sterol metabolism</keyword>
<comment type="function">
    <text evidence="2">A cytochrome P450 monooxygenase involved in the metabolism of various endogenous substrates, including fatty acids, steroid hormones and vitamins. Mechanistically, uses molecular oxygen inserting one oxygen atom into a substrate, and reducing the second into a water molecule, with two electrons provided by NADPH via cytochrome P450 reductase (NADPH--hemoprotein reductase). Catalyzes the hydroxylation of carbon-hydrogen bonds. Exhibits high catalytic activity for the formation of hydroxyestrogens from estrone (E1) and 17beta-estradiol (E2), namely 2-hydroxy E1 and E2. Metabolizes cholesterol toward 25-hydroxycholesterol, a physiological regulator of cellular cholesterol homeostasis. May act as a major enzyme for all-trans retinoic acid biosynthesis in the liver. Catalyzes two successive oxidative transformation of all-trans retinol to all-trans retinal and then to the active form all-trans retinoic acid. Primarily catalyzes stereoselective epoxidation of the last double bond of polyunsaturated fatty acids (PUFA), displaying a strong preference for the (R,S) stereoisomer. Catalyzes bisallylic hydroxylation and omega-1 hydroxylation of PUFA. May also participate in eicosanoids metabolism by converting hydroperoxide species into oxo metabolites (lipoxygenase-like reaction, NADPH-independent). Plays a role in the oxidative metabolism of xenobiotics. Catalyzes the N-hydroxylation of heterocyclic amines and the O-deethylation of phenacetin. Metabolizes caffeine via N3-demethylation.</text>
</comment>
<comment type="catalytic activity">
    <reaction evidence="2">
        <text>an organic molecule + reduced [NADPH--hemoprotein reductase] + O2 = an alcohol + oxidized [NADPH--hemoprotein reductase] + H2O + H(+)</text>
        <dbReference type="Rhea" id="RHEA:17149"/>
        <dbReference type="Rhea" id="RHEA-COMP:11964"/>
        <dbReference type="Rhea" id="RHEA-COMP:11965"/>
        <dbReference type="ChEBI" id="CHEBI:15377"/>
        <dbReference type="ChEBI" id="CHEBI:15378"/>
        <dbReference type="ChEBI" id="CHEBI:15379"/>
        <dbReference type="ChEBI" id="CHEBI:30879"/>
        <dbReference type="ChEBI" id="CHEBI:57618"/>
        <dbReference type="ChEBI" id="CHEBI:58210"/>
        <dbReference type="ChEBI" id="CHEBI:142491"/>
        <dbReference type="EC" id="1.14.14.1"/>
    </reaction>
    <physiologicalReaction direction="left-to-right" evidence="2">
        <dbReference type="Rhea" id="RHEA:17150"/>
    </physiologicalReaction>
</comment>
<comment type="catalytic activity">
    <reaction evidence="2">
        <text>17beta-estradiol + reduced [NADPH--hemoprotein reductase] + O2 = 2-hydroxy-17beta-estradiol + oxidized [NADPH--hemoprotein reductase] + H2O + H(+)</text>
        <dbReference type="Rhea" id="RHEA:47212"/>
        <dbReference type="Rhea" id="RHEA-COMP:11964"/>
        <dbReference type="Rhea" id="RHEA-COMP:11965"/>
        <dbReference type="ChEBI" id="CHEBI:15377"/>
        <dbReference type="ChEBI" id="CHEBI:15378"/>
        <dbReference type="ChEBI" id="CHEBI:15379"/>
        <dbReference type="ChEBI" id="CHEBI:16469"/>
        <dbReference type="ChEBI" id="CHEBI:28744"/>
        <dbReference type="ChEBI" id="CHEBI:57618"/>
        <dbReference type="ChEBI" id="CHEBI:58210"/>
    </reaction>
    <physiologicalReaction direction="left-to-right" evidence="2">
        <dbReference type="Rhea" id="RHEA:47213"/>
    </physiologicalReaction>
</comment>
<comment type="catalytic activity">
    <reaction evidence="2">
        <text>17beta-estradiol + reduced [NADPH--hemoprotein reductase] + O2 = 4-hydroxy-17beta-estradiol + oxidized [NADPH--hemoprotein reductase] + H2O + H(+)</text>
        <dbReference type="Rhea" id="RHEA:47280"/>
        <dbReference type="Rhea" id="RHEA-COMP:11964"/>
        <dbReference type="Rhea" id="RHEA-COMP:11965"/>
        <dbReference type="ChEBI" id="CHEBI:15377"/>
        <dbReference type="ChEBI" id="CHEBI:15378"/>
        <dbReference type="ChEBI" id="CHEBI:15379"/>
        <dbReference type="ChEBI" id="CHEBI:16469"/>
        <dbReference type="ChEBI" id="CHEBI:57618"/>
        <dbReference type="ChEBI" id="CHEBI:58210"/>
        <dbReference type="ChEBI" id="CHEBI:62845"/>
    </reaction>
    <physiologicalReaction direction="left-to-right" evidence="2">
        <dbReference type="Rhea" id="RHEA:47281"/>
    </physiologicalReaction>
</comment>
<comment type="catalytic activity">
    <reaction evidence="2">
        <text>estrone + reduced [NADPH--hemoprotein reductase] + O2 = 2-hydroxyestrone + oxidized [NADPH--hemoprotein reductase] + H2O + H(+)</text>
        <dbReference type="Rhea" id="RHEA:47208"/>
        <dbReference type="Rhea" id="RHEA-COMP:11964"/>
        <dbReference type="Rhea" id="RHEA-COMP:11965"/>
        <dbReference type="ChEBI" id="CHEBI:1156"/>
        <dbReference type="ChEBI" id="CHEBI:15377"/>
        <dbReference type="ChEBI" id="CHEBI:15378"/>
        <dbReference type="ChEBI" id="CHEBI:15379"/>
        <dbReference type="ChEBI" id="CHEBI:17263"/>
        <dbReference type="ChEBI" id="CHEBI:57618"/>
        <dbReference type="ChEBI" id="CHEBI:58210"/>
    </reaction>
    <physiologicalReaction direction="left-to-right" evidence="2">
        <dbReference type="Rhea" id="RHEA:47209"/>
    </physiologicalReaction>
</comment>
<comment type="catalytic activity">
    <reaction evidence="2">
        <text>estrone + reduced [NADPH--hemoprotein reductase] + O2 = 4-hydroxyestrone + oxidized [NADPH--hemoprotein reductase] + H2O + H(+)</text>
        <dbReference type="Rhea" id="RHEA:47292"/>
        <dbReference type="Rhea" id="RHEA-COMP:11964"/>
        <dbReference type="Rhea" id="RHEA-COMP:11965"/>
        <dbReference type="ChEBI" id="CHEBI:15377"/>
        <dbReference type="ChEBI" id="CHEBI:15378"/>
        <dbReference type="ChEBI" id="CHEBI:15379"/>
        <dbReference type="ChEBI" id="CHEBI:17263"/>
        <dbReference type="ChEBI" id="CHEBI:57618"/>
        <dbReference type="ChEBI" id="CHEBI:58210"/>
        <dbReference type="ChEBI" id="CHEBI:87602"/>
    </reaction>
    <physiologicalReaction direction="left-to-right" evidence="2">
        <dbReference type="Rhea" id="RHEA:47293"/>
    </physiologicalReaction>
</comment>
<comment type="catalytic activity">
    <reaction evidence="2">
        <text>cholesterol + reduced [NADPH--hemoprotein reductase] + O2 = 25-hydroxycholesterol + oxidized [NADPH--hemoprotein reductase] + H2O + H(+)</text>
        <dbReference type="Rhea" id="RHEA:50256"/>
        <dbReference type="Rhea" id="RHEA-COMP:11964"/>
        <dbReference type="Rhea" id="RHEA-COMP:11965"/>
        <dbReference type="ChEBI" id="CHEBI:15377"/>
        <dbReference type="ChEBI" id="CHEBI:15378"/>
        <dbReference type="ChEBI" id="CHEBI:15379"/>
        <dbReference type="ChEBI" id="CHEBI:16113"/>
        <dbReference type="ChEBI" id="CHEBI:42977"/>
        <dbReference type="ChEBI" id="CHEBI:57618"/>
        <dbReference type="ChEBI" id="CHEBI:58210"/>
    </reaction>
    <physiologicalReaction direction="left-to-right" evidence="2">
        <dbReference type="Rhea" id="RHEA:50257"/>
    </physiologicalReaction>
</comment>
<comment type="catalytic activity">
    <reaction evidence="2">
        <text>all-trans-retinol + reduced [NADPH--hemoprotein reductase] + O2 = all-trans-retinal + oxidized [NADPH--hemoprotein reductase] + 2 H2O + H(+)</text>
        <dbReference type="Rhea" id="RHEA:42092"/>
        <dbReference type="Rhea" id="RHEA-COMP:11964"/>
        <dbReference type="Rhea" id="RHEA-COMP:11965"/>
        <dbReference type="ChEBI" id="CHEBI:15377"/>
        <dbReference type="ChEBI" id="CHEBI:15378"/>
        <dbReference type="ChEBI" id="CHEBI:15379"/>
        <dbReference type="ChEBI" id="CHEBI:17336"/>
        <dbReference type="ChEBI" id="CHEBI:17898"/>
        <dbReference type="ChEBI" id="CHEBI:57618"/>
        <dbReference type="ChEBI" id="CHEBI:58210"/>
    </reaction>
    <physiologicalReaction direction="left-to-right" evidence="2">
        <dbReference type="Rhea" id="RHEA:42093"/>
    </physiologicalReaction>
</comment>
<comment type="catalytic activity">
    <reaction evidence="2">
        <text>all-trans-retinal + reduced [NADPH--hemoprotein reductase] + O2 = all-trans-retinoate + oxidized [NADPH--hemoprotein reductase] + H2O + 2 H(+)</text>
        <dbReference type="Rhea" id="RHEA:42088"/>
        <dbReference type="Rhea" id="RHEA-COMP:11964"/>
        <dbReference type="Rhea" id="RHEA-COMP:11965"/>
        <dbReference type="ChEBI" id="CHEBI:15377"/>
        <dbReference type="ChEBI" id="CHEBI:15378"/>
        <dbReference type="ChEBI" id="CHEBI:15379"/>
        <dbReference type="ChEBI" id="CHEBI:17898"/>
        <dbReference type="ChEBI" id="CHEBI:35291"/>
        <dbReference type="ChEBI" id="CHEBI:57618"/>
        <dbReference type="ChEBI" id="CHEBI:58210"/>
    </reaction>
    <physiologicalReaction direction="left-to-right" evidence="2">
        <dbReference type="Rhea" id="RHEA:42089"/>
    </physiologicalReaction>
</comment>
<comment type="catalytic activity">
    <reaction evidence="2">
        <text>(5Z,8Z,11Z,14Z)-eicosatetraenoate + reduced [NADPH--hemoprotein reductase] + O2 = (14R,15S)-epoxy-(5Z,8Z,11Z)-eicosatrienoate + oxidized [NADPH--hemoprotein reductase] + H2O + H(+)</text>
        <dbReference type="Rhea" id="RHEA:49860"/>
        <dbReference type="Rhea" id="RHEA-COMP:11964"/>
        <dbReference type="Rhea" id="RHEA-COMP:11965"/>
        <dbReference type="ChEBI" id="CHEBI:15377"/>
        <dbReference type="ChEBI" id="CHEBI:15378"/>
        <dbReference type="ChEBI" id="CHEBI:15379"/>
        <dbReference type="ChEBI" id="CHEBI:32395"/>
        <dbReference type="ChEBI" id="CHEBI:57618"/>
        <dbReference type="ChEBI" id="CHEBI:58210"/>
        <dbReference type="ChEBI" id="CHEBI:131965"/>
    </reaction>
    <physiologicalReaction direction="left-to-right" evidence="2">
        <dbReference type="Rhea" id="RHEA:49861"/>
    </physiologicalReaction>
</comment>
<comment type="catalytic activity">
    <reaction evidence="2">
        <text>(5Z,8Z,11Z,14Z)-eicosatetraenoate + reduced [NADPH--hemoprotein reductase] + O2 = (14S,15R)-epoxy-(5Z,8Z,11Z)-eicosatrienoate + oxidized [NADPH--hemoprotein reductase] + H2O + H(+)</text>
        <dbReference type="Rhea" id="RHEA:49856"/>
        <dbReference type="Rhea" id="RHEA-COMP:11964"/>
        <dbReference type="Rhea" id="RHEA-COMP:11965"/>
        <dbReference type="ChEBI" id="CHEBI:15377"/>
        <dbReference type="ChEBI" id="CHEBI:15378"/>
        <dbReference type="ChEBI" id="CHEBI:15379"/>
        <dbReference type="ChEBI" id="CHEBI:32395"/>
        <dbReference type="ChEBI" id="CHEBI:57618"/>
        <dbReference type="ChEBI" id="CHEBI:58210"/>
        <dbReference type="ChEBI" id="CHEBI:131964"/>
    </reaction>
    <physiologicalReaction direction="left-to-right" evidence="2">
        <dbReference type="Rhea" id="RHEA:49857"/>
    </physiologicalReaction>
</comment>
<comment type="catalytic activity">
    <reaction evidence="2">
        <text>(5Z,8Z,11Z,14Z,17Z)-eicosapentaenoate + reduced [NADPH--hemoprotein reductase] + O2 = (17R,18S)-epoxy-(5Z,8Z,11Z,14Z)-eicosatetraenoate + oxidized [NADPH--hemoprotein reductase] + H2O + H(+)</text>
        <dbReference type="Rhea" id="RHEA:39779"/>
        <dbReference type="Rhea" id="RHEA-COMP:11964"/>
        <dbReference type="Rhea" id="RHEA-COMP:11965"/>
        <dbReference type="ChEBI" id="CHEBI:15377"/>
        <dbReference type="ChEBI" id="CHEBI:15378"/>
        <dbReference type="ChEBI" id="CHEBI:15379"/>
        <dbReference type="ChEBI" id="CHEBI:57618"/>
        <dbReference type="ChEBI" id="CHEBI:58210"/>
        <dbReference type="ChEBI" id="CHEBI:58562"/>
        <dbReference type="ChEBI" id="CHEBI:76634"/>
    </reaction>
    <physiologicalReaction direction="left-to-right" evidence="2">
        <dbReference type="Rhea" id="RHEA:39780"/>
    </physiologicalReaction>
</comment>
<comment type="catalytic activity">
    <reaction evidence="2">
        <text>(4Z,7Z,10Z,13Z,16Z,19Z)-docosahexaenoate + reduced [NADPH--hemoprotein reductase] + O2 = (19R,20S)-epoxy-(4Z,7Z,10Z,13Z,16Z)-docosapentaenoate + oxidized [NADPH--hemoprotein reductase] + H2O + H(+)</text>
        <dbReference type="Rhea" id="RHEA:52120"/>
        <dbReference type="Rhea" id="RHEA-COMP:11964"/>
        <dbReference type="Rhea" id="RHEA-COMP:11965"/>
        <dbReference type="ChEBI" id="CHEBI:15377"/>
        <dbReference type="ChEBI" id="CHEBI:15378"/>
        <dbReference type="ChEBI" id="CHEBI:15379"/>
        <dbReference type="ChEBI" id="CHEBI:57618"/>
        <dbReference type="ChEBI" id="CHEBI:58210"/>
        <dbReference type="ChEBI" id="CHEBI:77016"/>
        <dbReference type="ChEBI" id="CHEBI:136410"/>
    </reaction>
    <physiologicalReaction direction="left-to-right" evidence="2">
        <dbReference type="Rhea" id="RHEA:52121"/>
    </physiologicalReaction>
</comment>
<comment type="catalytic activity">
    <reaction evidence="2">
        <text>(5S)-hydroperoxy-(6E,8Z,11Z,14Z)-eicosatetraenoate = 5-oxo-(6E,8Z,11Z,14Z)-eicosatetraenoate + H2O</text>
        <dbReference type="Rhea" id="RHEA:48632"/>
        <dbReference type="ChEBI" id="CHEBI:15377"/>
        <dbReference type="ChEBI" id="CHEBI:57450"/>
        <dbReference type="ChEBI" id="CHEBI:65342"/>
    </reaction>
    <physiologicalReaction direction="left-to-right" evidence="2">
        <dbReference type="Rhea" id="RHEA:48633"/>
    </physiologicalReaction>
</comment>
<comment type="catalytic activity">
    <reaction evidence="2">
        <text>(12S)-hydroperoxy-(5Z,8Z,10E,14Z)-eicosatetraenoate = 12-oxo-(5Z,8Z,10E,14Z)-eicosatetraenoate + H2O</text>
        <dbReference type="Rhea" id="RHEA:37947"/>
        <dbReference type="ChEBI" id="CHEBI:15377"/>
        <dbReference type="ChEBI" id="CHEBI:57444"/>
        <dbReference type="ChEBI" id="CHEBI:75231"/>
        <dbReference type="EC" id="4.2.1.152"/>
    </reaction>
    <physiologicalReaction direction="left-to-right" evidence="2">
        <dbReference type="Rhea" id="RHEA:37948"/>
    </physiologicalReaction>
</comment>
<comment type="catalytic activity">
    <reaction evidence="2">
        <text>(15S)-hydroperoxy-(5Z,8Z,11Z,13E)-eicosatetraenoate = 15-oxo-(5Z,8Z,11Z,13E)-eicosatetraenoate + H2O</text>
        <dbReference type="Rhea" id="RHEA:48636"/>
        <dbReference type="ChEBI" id="CHEBI:15377"/>
        <dbReference type="ChEBI" id="CHEBI:57410"/>
        <dbReference type="ChEBI" id="CHEBI:57446"/>
    </reaction>
    <physiologicalReaction direction="left-to-right" evidence="2">
        <dbReference type="Rhea" id="RHEA:48637"/>
    </physiologicalReaction>
</comment>
<comment type="catalytic activity">
    <reaction evidence="2">
        <text>(13S)-hydroperoxy-(9Z,11E)-octadecadienoate = 13-oxo-(9Z,11E)-octadecadienoate + H2O</text>
        <dbReference type="Rhea" id="RHEA:48716"/>
        <dbReference type="ChEBI" id="CHEBI:15377"/>
        <dbReference type="ChEBI" id="CHEBI:57466"/>
        <dbReference type="ChEBI" id="CHEBI:90781"/>
    </reaction>
    <physiologicalReaction direction="left-to-right" evidence="2">
        <dbReference type="Rhea" id="RHEA:48717"/>
    </physiologicalReaction>
</comment>
<comment type="catalytic activity">
    <reaction evidence="2">
        <text>(5Z,8Z,11Z,14Z)-eicosatetraenoate + reduced [NADPH--hemoprotein reductase] + O2 = 13-hydroxy-(5Z,8Z,11Z,14Z)-eicosatetraenoate + oxidized [NADPH--hemoprotein reductase] + H2O + H(+)</text>
        <dbReference type="Rhea" id="RHEA:52292"/>
        <dbReference type="Rhea" id="RHEA-COMP:11964"/>
        <dbReference type="Rhea" id="RHEA-COMP:11965"/>
        <dbReference type="ChEBI" id="CHEBI:15377"/>
        <dbReference type="ChEBI" id="CHEBI:15378"/>
        <dbReference type="ChEBI" id="CHEBI:15379"/>
        <dbReference type="ChEBI" id="CHEBI:32395"/>
        <dbReference type="ChEBI" id="CHEBI:57618"/>
        <dbReference type="ChEBI" id="CHEBI:58210"/>
        <dbReference type="ChEBI" id="CHEBI:136524"/>
    </reaction>
    <physiologicalReaction direction="left-to-right" evidence="2">
        <dbReference type="Rhea" id="RHEA:52293"/>
    </physiologicalReaction>
</comment>
<comment type="catalytic activity">
    <reaction evidence="2">
        <text>(5Z,8Z,11Z,14Z)-eicosatetraenoate + reduced [NADPH--hemoprotein reductase] + O2 = 19-hydroxy-(5Z,8Z,11Z,14Z)-eicosatetraenoate + oxidized [NADPH--hemoprotein reductase] + H2O + H(+)</text>
        <dbReference type="Rhea" id="RHEA:39759"/>
        <dbReference type="Rhea" id="RHEA-COMP:11964"/>
        <dbReference type="Rhea" id="RHEA-COMP:11965"/>
        <dbReference type="ChEBI" id="CHEBI:15377"/>
        <dbReference type="ChEBI" id="CHEBI:15378"/>
        <dbReference type="ChEBI" id="CHEBI:15379"/>
        <dbReference type="ChEBI" id="CHEBI:32395"/>
        <dbReference type="ChEBI" id="CHEBI:57618"/>
        <dbReference type="ChEBI" id="CHEBI:58210"/>
        <dbReference type="ChEBI" id="CHEBI:76627"/>
    </reaction>
    <physiologicalReaction direction="left-to-right" evidence="2">
        <dbReference type="Rhea" id="RHEA:39760"/>
    </physiologicalReaction>
</comment>
<comment type="catalytic activity">
    <reaction evidence="2">
        <text>(9Z,12Z)-octadecadienoate + reduced [NADPH--hemoprotein reductase] + O2 = 11-hydroxy-(9Z,12Z)-octadecadienoate + oxidized [NADPH--hemoprotein reductase] + H2O + H(+)</text>
        <dbReference type="Rhea" id="RHEA:52284"/>
        <dbReference type="Rhea" id="RHEA-COMP:11964"/>
        <dbReference type="Rhea" id="RHEA-COMP:11965"/>
        <dbReference type="ChEBI" id="CHEBI:15377"/>
        <dbReference type="ChEBI" id="CHEBI:15378"/>
        <dbReference type="ChEBI" id="CHEBI:15379"/>
        <dbReference type="ChEBI" id="CHEBI:30245"/>
        <dbReference type="ChEBI" id="CHEBI:57618"/>
        <dbReference type="ChEBI" id="CHEBI:58210"/>
        <dbReference type="ChEBI" id="CHEBI:136522"/>
    </reaction>
    <physiologicalReaction direction="left-to-right" evidence="2">
        <dbReference type="Rhea" id="RHEA:52285"/>
    </physiologicalReaction>
</comment>
<comment type="cofactor">
    <cofactor evidence="1">
        <name>heme</name>
        <dbReference type="ChEBI" id="CHEBI:30413"/>
    </cofactor>
</comment>
<comment type="pathway">
    <text evidence="2">Cofactor metabolism; retinol metabolism.</text>
</comment>
<comment type="pathway">
    <text evidence="2">Steroid metabolism; cholesterol metabolism.</text>
</comment>
<comment type="pathway">
    <text evidence="2">Lipid metabolism; arachidonate metabolism.</text>
</comment>
<comment type="subunit">
    <text evidence="2">Interacts with PGRMC1; the interaction requires PGRMC1 homodimerization.</text>
</comment>
<comment type="subcellular location">
    <subcellularLocation>
        <location evidence="2">Endoplasmic reticulum membrane</location>
        <topology evidence="2">Peripheral membrane protein</topology>
    </subcellularLocation>
    <subcellularLocation>
        <location evidence="2">Microsome membrane</location>
        <topology evidence="2">Peripheral membrane protein</topology>
    </subcellularLocation>
</comment>
<comment type="similarity">
    <text evidence="3">Belongs to the cytochrome P450 family.</text>
</comment>
<accession>Q3LFT9</accession>
<protein>
    <recommendedName>
        <fullName>Cytochrome P450 1A2</fullName>
        <ecNumber evidence="2">1.14.14.1</ecNumber>
    </recommendedName>
    <alternativeName>
        <fullName>CYPIA2</fullName>
    </alternativeName>
    <alternativeName>
        <fullName evidence="2">Cholesterol 25-hydroxylase</fullName>
    </alternativeName>
    <alternativeName>
        <fullName>Hydroperoxy icosatetraenoate dehydratase</fullName>
        <ecNumber evidence="2">4.2.1.152</ecNumber>
    </alternativeName>
</protein>
<gene>
    <name type="primary">CYP1A2</name>
</gene>
<name>CP1A2_BALAC</name>
<proteinExistence type="evidence at transcript level"/>